<organism>
    <name type="scientific">Rhodopseudomonas palustris (strain TIE-1)</name>
    <dbReference type="NCBI Taxonomy" id="395960"/>
    <lineage>
        <taxon>Bacteria</taxon>
        <taxon>Pseudomonadati</taxon>
        <taxon>Pseudomonadota</taxon>
        <taxon>Alphaproteobacteria</taxon>
        <taxon>Hyphomicrobiales</taxon>
        <taxon>Nitrobacteraceae</taxon>
        <taxon>Rhodopseudomonas</taxon>
    </lineage>
</organism>
<proteinExistence type="inferred from homology"/>
<gene>
    <name evidence="1" type="primary">argB</name>
    <name type="ordered locus">Rpal_0633</name>
</gene>
<reference key="1">
    <citation type="submission" date="2008-05" db="EMBL/GenBank/DDBJ databases">
        <title>Complete sequence of Rhodopseudomonas palustris TIE-1.</title>
        <authorList>
            <consortium name="US DOE Joint Genome Institute"/>
            <person name="Lucas S."/>
            <person name="Copeland A."/>
            <person name="Lapidus A."/>
            <person name="Glavina del Rio T."/>
            <person name="Dalin E."/>
            <person name="Tice H."/>
            <person name="Pitluck S."/>
            <person name="Chain P."/>
            <person name="Malfatti S."/>
            <person name="Shin M."/>
            <person name="Vergez L."/>
            <person name="Lang D."/>
            <person name="Schmutz J."/>
            <person name="Larimer F."/>
            <person name="Land M."/>
            <person name="Hauser L."/>
            <person name="Kyrpides N."/>
            <person name="Mikhailova N."/>
            <person name="Emerson D."/>
            <person name="Newman D.K."/>
            <person name="Roden E."/>
            <person name="Richardson P."/>
        </authorList>
    </citation>
    <scope>NUCLEOTIDE SEQUENCE [LARGE SCALE GENOMIC DNA]</scope>
    <source>
        <strain>TIE-1</strain>
    </source>
</reference>
<evidence type="ECO:0000255" key="1">
    <source>
        <dbReference type="HAMAP-Rule" id="MF_00082"/>
    </source>
</evidence>
<protein>
    <recommendedName>
        <fullName evidence="1">Acetylglutamate kinase</fullName>
        <ecNumber evidence="1">2.7.2.8</ecNumber>
    </recommendedName>
    <alternativeName>
        <fullName evidence="1">N-acetyl-L-glutamate 5-phosphotransferase</fullName>
    </alternativeName>
    <alternativeName>
        <fullName evidence="1">NAG kinase</fullName>
        <shortName evidence="1">NAGK</shortName>
    </alternativeName>
</protein>
<comment type="function">
    <text evidence="1">Catalyzes the ATP-dependent phosphorylation of N-acetyl-L-glutamate.</text>
</comment>
<comment type="catalytic activity">
    <reaction evidence="1">
        <text>N-acetyl-L-glutamate + ATP = N-acetyl-L-glutamyl 5-phosphate + ADP</text>
        <dbReference type="Rhea" id="RHEA:14629"/>
        <dbReference type="ChEBI" id="CHEBI:30616"/>
        <dbReference type="ChEBI" id="CHEBI:44337"/>
        <dbReference type="ChEBI" id="CHEBI:57936"/>
        <dbReference type="ChEBI" id="CHEBI:456216"/>
        <dbReference type="EC" id="2.7.2.8"/>
    </reaction>
</comment>
<comment type="pathway">
    <text evidence="1">Amino-acid biosynthesis; L-arginine biosynthesis; N(2)-acetyl-L-ornithine from L-glutamate: step 2/4.</text>
</comment>
<comment type="subcellular location">
    <subcellularLocation>
        <location evidence="1">Cytoplasm</location>
    </subcellularLocation>
</comment>
<comment type="similarity">
    <text evidence="1">Belongs to the acetylglutamate kinase family. ArgB subfamily.</text>
</comment>
<feature type="chain" id="PRO_1000092877" description="Acetylglutamate kinase">
    <location>
        <begin position="1"/>
        <end position="298"/>
    </location>
</feature>
<feature type="binding site" evidence="1">
    <location>
        <begin position="69"/>
        <end position="70"/>
    </location>
    <ligand>
        <name>substrate</name>
    </ligand>
</feature>
<feature type="binding site" evidence="1">
    <location>
        <position position="91"/>
    </location>
    <ligand>
        <name>substrate</name>
    </ligand>
</feature>
<feature type="binding site" evidence="1">
    <location>
        <position position="196"/>
    </location>
    <ligand>
        <name>substrate</name>
    </ligand>
</feature>
<feature type="site" description="Transition state stabilizer" evidence="1">
    <location>
        <position position="34"/>
    </location>
</feature>
<feature type="site" description="Transition state stabilizer" evidence="1">
    <location>
        <position position="256"/>
    </location>
</feature>
<sequence length="298" mass="31500">MTDAPVISPLDQARILSEALPHMQRYDEETIVIKYGGHAMGAEDTAKAFARDIVLLEQTAVNPVVVHGGGPQIAQMLKRLGIKSEFAAGLRITDAATIEIVEMVLAGSINKQLVGYINEAGGKAVGLCGKDGNMVSATKATRTMVDPDSRIEEVIDLGFVGEPEKVDLTLLNQLIGHELIPVLAPLATSASGQTFNVNADTFAGAVAGALRAKRLLLLTDVPGVLDQNKKLIPELSIKDARKLIADGTISGGMIPKVETCIYALEQGVEGVVILDGKVPHAVLLELFTNQGTGTLIHK</sequence>
<keyword id="KW-0028">Amino-acid biosynthesis</keyword>
<keyword id="KW-0055">Arginine biosynthesis</keyword>
<keyword id="KW-0067">ATP-binding</keyword>
<keyword id="KW-0963">Cytoplasm</keyword>
<keyword id="KW-0418">Kinase</keyword>
<keyword id="KW-0547">Nucleotide-binding</keyword>
<keyword id="KW-0808">Transferase</keyword>
<accession>B3QCH9</accession>
<dbReference type="EC" id="2.7.2.8" evidence="1"/>
<dbReference type="EMBL" id="CP001096">
    <property type="protein sequence ID" value="ACE99192.1"/>
    <property type="molecule type" value="Genomic_DNA"/>
</dbReference>
<dbReference type="RefSeq" id="WP_012494288.1">
    <property type="nucleotide sequence ID" value="NC_011004.1"/>
</dbReference>
<dbReference type="SMR" id="B3QCH9"/>
<dbReference type="KEGG" id="rpt:Rpal_0633"/>
<dbReference type="HOGENOM" id="CLU_053680_0_0_5"/>
<dbReference type="OrthoDB" id="9803155at2"/>
<dbReference type="UniPathway" id="UPA00068">
    <property type="reaction ID" value="UER00107"/>
</dbReference>
<dbReference type="Proteomes" id="UP000001725">
    <property type="component" value="Chromosome"/>
</dbReference>
<dbReference type="GO" id="GO:0005737">
    <property type="term" value="C:cytoplasm"/>
    <property type="evidence" value="ECO:0007669"/>
    <property type="project" value="UniProtKB-SubCell"/>
</dbReference>
<dbReference type="GO" id="GO:0003991">
    <property type="term" value="F:acetylglutamate kinase activity"/>
    <property type="evidence" value="ECO:0007669"/>
    <property type="project" value="UniProtKB-UniRule"/>
</dbReference>
<dbReference type="GO" id="GO:0005524">
    <property type="term" value="F:ATP binding"/>
    <property type="evidence" value="ECO:0007669"/>
    <property type="project" value="UniProtKB-UniRule"/>
</dbReference>
<dbReference type="GO" id="GO:0042450">
    <property type="term" value="P:arginine biosynthetic process via ornithine"/>
    <property type="evidence" value="ECO:0007669"/>
    <property type="project" value="UniProtKB-UniRule"/>
</dbReference>
<dbReference type="GO" id="GO:0006526">
    <property type="term" value="P:L-arginine biosynthetic process"/>
    <property type="evidence" value="ECO:0007669"/>
    <property type="project" value="UniProtKB-UniPathway"/>
</dbReference>
<dbReference type="CDD" id="cd04250">
    <property type="entry name" value="AAK_NAGK-C"/>
    <property type="match status" value="1"/>
</dbReference>
<dbReference type="FunFam" id="3.40.1160.10:FF:000004">
    <property type="entry name" value="Acetylglutamate kinase"/>
    <property type="match status" value="1"/>
</dbReference>
<dbReference type="Gene3D" id="3.40.1160.10">
    <property type="entry name" value="Acetylglutamate kinase-like"/>
    <property type="match status" value="1"/>
</dbReference>
<dbReference type="HAMAP" id="MF_00082">
    <property type="entry name" value="ArgB"/>
    <property type="match status" value="1"/>
</dbReference>
<dbReference type="InterPro" id="IPR036393">
    <property type="entry name" value="AceGlu_kinase-like_sf"/>
</dbReference>
<dbReference type="InterPro" id="IPR004662">
    <property type="entry name" value="AcgluKinase_fam"/>
</dbReference>
<dbReference type="InterPro" id="IPR037528">
    <property type="entry name" value="ArgB"/>
</dbReference>
<dbReference type="InterPro" id="IPR001048">
    <property type="entry name" value="Asp/Glu/Uridylate_kinase"/>
</dbReference>
<dbReference type="InterPro" id="IPR041727">
    <property type="entry name" value="NAGK-C"/>
</dbReference>
<dbReference type="NCBIfam" id="TIGR00761">
    <property type="entry name" value="argB"/>
    <property type="match status" value="1"/>
</dbReference>
<dbReference type="PANTHER" id="PTHR23342">
    <property type="entry name" value="N-ACETYLGLUTAMATE SYNTHASE"/>
    <property type="match status" value="1"/>
</dbReference>
<dbReference type="PANTHER" id="PTHR23342:SF0">
    <property type="entry name" value="N-ACETYLGLUTAMATE SYNTHASE, MITOCHONDRIAL"/>
    <property type="match status" value="1"/>
</dbReference>
<dbReference type="Pfam" id="PF00696">
    <property type="entry name" value="AA_kinase"/>
    <property type="match status" value="1"/>
</dbReference>
<dbReference type="PIRSF" id="PIRSF000728">
    <property type="entry name" value="NAGK"/>
    <property type="match status" value="1"/>
</dbReference>
<dbReference type="SUPFAM" id="SSF53633">
    <property type="entry name" value="Carbamate kinase-like"/>
    <property type="match status" value="1"/>
</dbReference>
<name>ARGB_RHOPT</name>